<feature type="signal peptide" evidence="4">
    <location>
        <begin position="1"/>
        <end position="23"/>
    </location>
</feature>
<feature type="chain" id="PRO_0000260316" description="Ephrin type-A receptor 2">
    <location>
        <begin position="24"/>
        <end position="976"/>
    </location>
</feature>
<feature type="topological domain" description="Extracellular" evidence="4">
    <location>
        <begin position="25"/>
        <end position="537"/>
    </location>
</feature>
<feature type="transmembrane region" description="Helical" evidence="4">
    <location>
        <begin position="538"/>
        <end position="558"/>
    </location>
</feature>
<feature type="topological domain" description="Cytoplasmic" evidence="4">
    <location>
        <begin position="559"/>
        <end position="976"/>
    </location>
</feature>
<feature type="domain" description="Eph LBD" evidence="8">
    <location>
        <begin position="28"/>
        <end position="206"/>
    </location>
</feature>
<feature type="domain" description="Fibronectin type-III 1" evidence="7">
    <location>
        <begin position="328"/>
        <end position="432"/>
    </location>
</feature>
<feature type="domain" description="Fibronectin type-III 2" evidence="7">
    <location>
        <begin position="438"/>
        <end position="529"/>
    </location>
</feature>
<feature type="domain" description="Protein kinase" evidence="5">
    <location>
        <begin position="613"/>
        <end position="875"/>
    </location>
</feature>
<feature type="domain" description="SAM" evidence="6">
    <location>
        <begin position="904"/>
        <end position="968"/>
    </location>
</feature>
<feature type="region of interest" description="Mediates interaction with CLDN4" evidence="1">
    <location>
        <begin position="1"/>
        <end position="206"/>
    </location>
</feature>
<feature type="region of interest" description="Mediates interaction with ARHGEF16" evidence="1">
    <location>
        <begin position="606"/>
        <end position="906"/>
    </location>
</feature>
<feature type="region of interest" description="Negatively regulates interaction with ARHGEF16" evidence="1">
    <location>
        <begin position="886"/>
        <end position="976"/>
    </location>
</feature>
<feature type="short sequence motif" description="PDZ-binding" evidence="4">
    <location>
        <begin position="974"/>
        <end position="976"/>
    </location>
</feature>
<feature type="active site" description="Proton acceptor" evidence="5 9">
    <location>
        <position position="739"/>
    </location>
</feature>
<feature type="binding site" evidence="5">
    <location>
        <begin position="619"/>
        <end position="627"/>
    </location>
    <ligand>
        <name>ATP</name>
        <dbReference type="ChEBI" id="CHEBI:30616"/>
    </ligand>
</feature>
<feature type="binding site" evidence="5">
    <location>
        <position position="646"/>
    </location>
    <ligand>
        <name>ATP</name>
        <dbReference type="ChEBI" id="CHEBI:30616"/>
    </ligand>
</feature>
<feature type="modified residue" description="Phosphoserine" evidence="2">
    <location>
        <position position="570"/>
    </location>
</feature>
<feature type="modified residue" description="Phosphotyrosine" evidence="2">
    <location>
        <position position="575"/>
    </location>
</feature>
<feature type="modified residue" description="Phosphoserine" evidence="2">
    <location>
        <position position="579"/>
    </location>
</feature>
<feature type="modified residue" description="Phosphotyrosine; by autocatalysis" evidence="1">
    <location>
        <position position="588"/>
    </location>
</feature>
<feature type="modified residue" description="Phosphotyrosine" evidence="3">
    <location>
        <position position="594"/>
    </location>
</feature>
<feature type="modified residue" description="Phosphotyrosine" evidence="2">
    <location>
        <position position="628"/>
    </location>
</feature>
<feature type="modified residue" description="Phosphothreonine" evidence="2">
    <location>
        <position position="647"/>
    </location>
</feature>
<feature type="modified residue" description="Phosphotyrosine; by autocatalysis" evidence="3">
    <location>
        <position position="735"/>
    </location>
</feature>
<feature type="modified residue" description="Phosphotyrosine" evidence="3">
    <location>
        <position position="772"/>
    </location>
</feature>
<feature type="modified residue" description="Phosphoserine" evidence="2">
    <location>
        <position position="869"/>
    </location>
</feature>
<feature type="modified residue" description="Phosphoserine" evidence="2">
    <location>
        <position position="892"/>
    </location>
</feature>
<feature type="modified residue" description="Phosphoserine" evidence="2">
    <location>
        <position position="897"/>
    </location>
</feature>
<feature type="modified residue" description="Phosphoserine" evidence="2">
    <location>
        <position position="901"/>
    </location>
</feature>
<feature type="modified residue" description="Phosphotyrosine; by autocatalysis" evidence="4">
    <location>
        <position position="921"/>
    </location>
</feature>
<feature type="modified residue" description="Phosphotyrosine" evidence="2">
    <location>
        <position position="930"/>
    </location>
</feature>
<feature type="glycosylation site" description="N-linked (GlcNAc...) asparagine" evidence="4">
    <location>
        <position position="407"/>
    </location>
</feature>
<feature type="glycosylation site" description="N-linked (GlcNAc...) asparagine" evidence="4">
    <location>
        <position position="435"/>
    </location>
</feature>
<feature type="disulfide bond" evidence="1">
    <location>
        <begin position="70"/>
        <end position="188"/>
    </location>
</feature>
<feature type="disulfide bond" evidence="1">
    <location>
        <begin position="105"/>
        <end position="115"/>
    </location>
</feature>
<evidence type="ECO:0000250" key="1"/>
<evidence type="ECO:0000250" key="2">
    <source>
        <dbReference type="UniProtKB" id="P29317"/>
    </source>
</evidence>
<evidence type="ECO:0000250" key="3">
    <source>
        <dbReference type="UniProtKB" id="Q03145"/>
    </source>
</evidence>
<evidence type="ECO:0000255" key="4"/>
<evidence type="ECO:0000255" key="5">
    <source>
        <dbReference type="PROSITE-ProRule" id="PRU00159"/>
    </source>
</evidence>
<evidence type="ECO:0000255" key="6">
    <source>
        <dbReference type="PROSITE-ProRule" id="PRU00184"/>
    </source>
</evidence>
<evidence type="ECO:0000255" key="7">
    <source>
        <dbReference type="PROSITE-ProRule" id="PRU00316"/>
    </source>
</evidence>
<evidence type="ECO:0000255" key="8">
    <source>
        <dbReference type="PROSITE-ProRule" id="PRU00883"/>
    </source>
</evidence>
<evidence type="ECO:0000255" key="9">
    <source>
        <dbReference type="PROSITE-ProRule" id="PRU10028"/>
    </source>
</evidence>
<keyword id="KW-0037">Angiogenesis</keyword>
<keyword id="KW-0053">Apoptosis</keyword>
<keyword id="KW-0067">ATP-binding</keyword>
<keyword id="KW-0130">Cell adhesion</keyword>
<keyword id="KW-0965">Cell junction</keyword>
<keyword id="KW-1003">Cell membrane</keyword>
<keyword id="KW-0966">Cell projection</keyword>
<keyword id="KW-0221">Differentiation</keyword>
<keyword id="KW-1015">Disulfide bond</keyword>
<keyword id="KW-0325">Glycoprotein</keyword>
<keyword id="KW-0418">Kinase</keyword>
<keyword id="KW-0472">Membrane</keyword>
<keyword id="KW-0547">Nucleotide-binding</keyword>
<keyword id="KW-0597">Phosphoprotein</keyword>
<keyword id="KW-0675">Receptor</keyword>
<keyword id="KW-1185">Reference proteome</keyword>
<keyword id="KW-0677">Repeat</keyword>
<keyword id="KW-0732">Signal</keyword>
<keyword id="KW-0808">Transferase</keyword>
<keyword id="KW-0812">Transmembrane</keyword>
<keyword id="KW-1133">Transmembrane helix</keyword>
<keyword id="KW-0829">Tyrosine-protein kinase</keyword>
<keyword id="KW-0832">Ubl conjugation</keyword>
<name>EPHA2_MACFA</name>
<accession>Q1KL86</accession>
<organism>
    <name type="scientific">Macaca fascicularis</name>
    <name type="common">Crab-eating macaque</name>
    <name type="synonym">Cynomolgus monkey</name>
    <dbReference type="NCBI Taxonomy" id="9541"/>
    <lineage>
        <taxon>Eukaryota</taxon>
        <taxon>Metazoa</taxon>
        <taxon>Chordata</taxon>
        <taxon>Craniata</taxon>
        <taxon>Vertebrata</taxon>
        <taxon>Euteleostomi</taxon>
        <taxon>Mammalia</taxon>
        <taxon>Eutheria</taxon>
        <taxon>Euarchontoglires</taxon>
        <taxon>Primates</taxon>
        <taxon>Haplorrhini</taxon>
        <taxon>Catarrhini</taxon>
        <taxon>Cercopithecidae</taxon>
        <taxon>Cercopithecinae</taxon>
        <taxon>Macaca</taxon>
    </lineage>
</organism>
<reference key="1">
    <citation type="submission" date="2006-04" db="EMBL/GenBank/DDBJ databases">
        <title>Macaca fascicularis EPH receptor A2 (EPHA2).</title>
        <authorList>
            <person name="Walsh W.D."/>
            <person name="Bruckheimer E.M."/>
        </authorList>
    </citation>
    <scope>NUCLEOTIDE SEQUENCE [MRNA]</scope>
    <source>
        <tissue>Skin</tissue>
    </source>
</reference>
<gene>
    <name type="primary">EPHA2</name>
</gene>
<sequence>MELWAARACFVLLWGCALAPATAAQGKEVVLLDFAAAGGELGWLTHPYGKGWDLMQNIMNDMPIYMYSVCNVMSGDQDNWLRTNWVYRGEAERIFIELKFTVRDCNSFPGGASSCKETFNLYYAESDLDYGTNFQKRLFTKIDTIAPDEITVSSDFEARHVKLNVEERSVGPLTRKGFYLAFQDIGACVALLSVRVYYKKCPELLQSLARFPETIAGSDAPSLATVAGTCVDHAVVPPGGEEPRMHCAVDGEWLVPIGQCLCQAGYEKVEDACQACSPGFFKFEVSESPCLECPEHTLPSPEGATSCECEEGFFRAPQDPMSMPCTRPPSAPHYLTAVGMGAKVELRWTPPQDSGGREDIVYSVTCEQCWPESGECGPCESSVRYSEPPHGLTRTSVTVSDLEPHMNYTFTVEARNGVSGLVTSRSFRTASVSINQTEPPKVRLEGRSTTSLSVSWSIPPPQQSRVWKYEVTYRKKGDSNSYNVRRTEGFSVTLDDLAPDTTYLVQVQALTQEGQGAGSKVHEFQTLSPEGSGSLAVIGGVAVCVVLLLLLAGAGFFIHRRRKNLRARQSPEDVYFSKSEQLKPLKTYVDPHTYEDPNQAVLKFTTEIHPSCVTRQKVIGAGEFGEVYKGTLKTSSGKKEVPVAIKTLKAGYTEKQRVDFLGEAGIMGQFSHHNIIRLEGVISKYKPMMIITEFMENGALDKFLREKDGEFSVLQLVGMLRGIAAGMKYLANMNYVHRDLAARNILVNSNLVCKVSDFGLSRVLEDDPEATYTTSGGKIPIRWTAPEAISYRKFTSASDVWSFGIVMWEVMTYGERPYWELSNHEVMKAINDGFRLPTPMDCPSAIYQLMMQCWQQERARRPKFADIVSILDKLIRAPDSLKTLADFDPRVSIRLPSTSGSEGVPFRTVSEWLESIKMQQYTEHFMAAGYTAIEKVVQMTNDDIKRIGVRLPGHQKRIAYSLLGLKDQVNTVGIPI</sequence>
<dbReference type="EC" id="2.7.10.1"/>
<dbReference type="EMBL" id="DQ478608">
    <property type="protein sequence ID" value="ABE96827.1"/>
    <property type="molecule type" value="mRNA"/>
</dbReference>
<dbReference type="RefSeq" id="NP_001306345.1">
    <property type="nucleotide sequence ID" value="NM_001319416.1"/>
</dbReference>
<dbReference type="SMR" id="Q1KL86"/>
<dbReference type="STRING" id="9541.ENSMFAP00000027502"/>
<dbReference type="GlyCosmos" id="Q1KL86">
    <property type="glycosylation" value="2 sites, No reported glycans"/>
</dbReference>
<dbReference type="eggNOG" id="KOG0196">
    <property type="taxonomic scope" value="Eukaryota"/>
</dbReference>
<dbReference type="Proteomes" id="UP000233100">
    <property type="component" value="Unplaced"/>
</dbReference>
<dbReference type="GO" id="GO:0030425">
    <property type="term" value="C:dendrite"/>
    <property type="evidence" value="ECO:0007669"/>
    <property type="project" value="TreeGrafter"/>
</dbReference>
<dbReference type="GO" id="GO:0005925">
    <property type="term" value="C:focal adhesion"/>
    <property type="evidence" value="ECO:0000250"/>
    <property type="project" value="UniProtKB"/>
</dbReference>
<dbReference type="GO" id="GO:0030027">
    <property type="term" value="C:lamellipodium"/>
    <property type="evidence" value="ECO:0000250"/>
    <property type="project" value="UniProtKB"/>
</dbReference>
<dbReference type="GO" id="GO:0031258">
    <property type="term" value="C:lamellipodium membrane"/>
    <property type="evidence" value="ECO:0007669"/>
    <property type="project" value="UniProtKB-SubCell"/>
</dbReference>
<dbReference type="GO" id="GO:0031256">
    <property type="term" value="C:leading edge membrane"/>
    <property type="evidence" value="ECO:0000250"/>
    <property type="project" value="UniProtKB"/>
</dbReference>
<dbReference type="GO" id="GO:0005886">
    <property type="term" value="C:plasma membrane"/>
    <property type="evidence" value="ECO:0000250"/>
    <property type="project" value="UniProtKB"/>
</dbReference>
<dbReference type="GO" id="GO:0032587">
    <property type="term" value="C:ruffle membrane"/>
    <property type="evidence" value="ECO:0007669"/>
    <property type="project" value="UniProtKB-SubCell"/>
</dbReference>
<dbReference type="GO" id="GO:0005524">
    <property type="term" value="F:ATP binding"/>
    <property type="evidence" value="ECO:0007669"/>
    <property type="project" value="UniProtKB-KW"/>
</dbReference>
<dbReference type="GO" id="GO:0004714">
    <property type="term" value="F:transmembrane receptor protein tyrosine kinase activity"/>
    <property type="evidence" value="ECO:0000250"/>
    <property type="project" value="UniProtKB"/>
</dbReference>
<dbReference type="GO" id="GO:0005005">
    <property type="term" value="F:transmembrane-ephrin receptor activity"/>
    <property type="evidence" value="ECO:0007669"/>
    <property type="project" value="TreeGrafter"/>
</dbReference>
<dbReference type="GO" id="GO:0090630">
    <property type="term" value="P:activation of GTPase activity"/>
    <property type="evidence" value="ECO:0000250"/>
    <property type="project" value="UniProtKB"/>
</dbReference>
<dbReference type="GO" id="GO:0001525">
    <property type="term" value="P:angiogenesis"/>
    <property type="evidence" value="ECO:0007669"/>
    <property type="project" value="UniProtKB-KW"/>
</dbReference>
<dbReference type="GO" id="GO:0006915">
    <property type="term" value="P:apoptotic process"/>
    <property type="evidence" value="ECO:0007669"/>
    <property type="project" value="UniProtKB-KW"/>
</dbReference>
<dbReference type="GO" id="GO:0007411">
    <property type="term" value="P:axon guidance"/>
    <property type="evidence" value="ECO:0007669"/>
    <property type="project" value="TreeGrafter"/>
</dbReference>
<dbReference type="GO" id="GO:0046849">
    <property type="term" value="P:bone remodeling"/>
    <property type="evidence" value="ECO:0000250"/>
    <property type="project" value="UniProtKB"/>
</dbReference>
<dbReference type="GO" id="GO:0060444">
    <property type="term" value="P:branching involved in mammary gland duct morphogenesis"/>
    <property type="evidence" value="ECO:0000250"/>
    <property type="project" value="UniProtKB"/>
</dbReference>
<dbReference type="GO" id="GO:0046058">
    <property type="term" value="P:cAMP metabolic process"/>
    <property type="evidence" value="ECO:0000250"/>
    <property type="project" value="UniProtKB"/>
</dbReference>
<dbReference type="GO" id="GO:0007155">
    <property type="term" value="P:cell adhesion"/>
    <property type="evidence" value="ECO:0007669"/>
    <property type="project" value="UniProtKB-KW"/>
</dbReference>
<dbReference type="GO" id="GO:0060326">
    <property type="term" value="P:cell chemotaxis"/>
    <property type="evidence" value="ECO:0000250"/>
    <property type="project" value="UniProtKB"/>
</dbReference>
<dbReference type="GO" id="GO:0016477">
    <property type="term" value="P:cell migration"/>
    <property type="evidence" value="ECO:0000250"/>
    <property type="project" value="UniProtKB"/>
</dbReference>
<dbReference type="GO" id="GO:0048870">
    <property type="term" value="P:cell motility"/>
    <property type="evidence" value="ECO:0000250"/>
    <property type="project" value="UniProtKB"/>
</dbReference>
<dbReference type="GO" id="GO:0048013">
    <property type="term" value="P:ephrin receptor signaling pathway"/>
    <property type="evidence" value="ECO:0000250"/>
    <property type="project" value="UniProtKB"/>
</dbReference>
<dbReference type="GO" id="GO:0070309">
    <property type="term" value="P:lens fiber cell morphogenesis"/>
    <property type="evidence" value="ECO:0000250"/>
    <property type="project" value="UniProtKB"/>
</dbReference>
<dbReference type="GO" id="GO:0033598">
    <property type="term" value="P:mammary gland epithelial cell proliferation"/>
    <property type="evidence" value="ECO:0000250"/>
    <property type="project" value="UniProtKB"/>
</dbReference>
<dbReference type="GO" id="GO:0001649">
    <property type="term" value="P:osteoblast differentiation"/>
    <property type="evidence" value="ECO:0000250"/>
    <property type="project" value="UniProtKB"/>
</dbReference>
<dbReference type="GO" id="GO:0030316">
    <property type="term" value="P:osteoclast differentiation"/>
    <property type="evidence" value="ECO:0000250"/>
    <property type="project" value="UniProtKB"/>
</dbReference>
<dbReference type="GO" id="GO:1903078">
    <property type="term" value="P:positive regulation of protein localization to plasma membrane"/>
    <property type="evidence" value="ECO:0000250"/>
    <property type="project" value="UniProtKB"/>
</dbReference>
<dbReference type="GO" id="GO:0045765">
    <property type="term" value="P:regulation of angiogenesis"/>
    <property type="evidence" value="ECO:0000250"/>
    <property type="project" value="UniProtKB"/>
</dbReference>
<dbReference type="GO" id="GO:0033628">
    <property type="term" value="P:regulation of cell adhesion mediated by integrin"/>
    <property type="evidence" value="ECO:0000250"/>
    <property type="project" value="UniProtKB"/>
</dbReference>
<dbReference type="GO" id="GO:0010591">
    <property type="term" value="P:regulation of lamellipodium assembly"/>
    <property type="evidence" value="ECO:0000250"/>
    <property type="project" value="UniProtKB"/>
</dbReference>
<dbReference type="GO" id="GO:0070848">
    <property type="term" value="P:response to growth factor"/>
    <property type="evidence" value="ECO:0000250"/>
    <property type="project" value="UniProtKB"/>
</dbReference>
<dbReference type="CDD" id="cd10480">
    <property type="entry name" value="EphR_LBD_A2"/>
    <property type="match status" value="1"/>
</dbReference>
<dbReference type="CDD" id="cd00063">
    <property type="entry name" value="FN3"/>
    <property type="match status" value="2"/>
</dbReference>
<dbReference type="CDD" id="cd09543">
    <property type="entry name" value="SAM_EPH-A2"/>
    <property type="match status" value="1"/>
</dbReference>
<dbReference type="FunFam" id="1.10.150.50:FF:000029">
    <property type="entry name" value="Ephrin type-A receptor 1"/>
    <property type="match status" value="1"/>
</dbReference>
<dbReference type="FunFam" id="1.20.5.510:FF:000004">
    <property type="entry name" value="Ephrin type-A receptor 2"/>
    <property type="match status" value="1"/>
</dbReference>
<dbReference type="FunFam" id="2.60.120.260:FF:000023">
    <property type="entry name" value="Ephrin type-A receptor 2"/>
    <property type="match status" value="1"/>
</dbReference>
<dbReference type="FunFam" id="2.60.40.10:FF:000724">
    <property type="entry name" value="ephrin type-A receptor 2"/>
    <property type="match status" value="1"/>
</dbReference>
<dbReference type="FunFam" id="2.60.40.1770:FF:000002">
    <property type="entry name" value="ephrin type-A receptor 2"/>
    <property type="match status" value="1"/>
</dbReference>
<dbReference type="FunFam" id="1.10.510.10:FF:000019">
    <property type="entry name" value="Ephrin type-A receptor 5"/>
    <property type="match status" value="1"/>
</dbReference>
<dbReference type="FunFam" id="2.10.50.10:FF:000001">
    <property type="entry name" value="Ephrin type-A receptor 5"/>
    <property type="match status" value="1"/>
</dbReference>
<dbReference type="FunFam" id="3.30.200.20:FF:000001">
    <property type="entry name" value="Ephrin type-A receptor 5"/>
    <property type="match status" value="1"/>
</dbReference>
<dbReference type="FunFam" id="2.60.40.10:FF:000059">
    <property type="entry name" value="Ephrin type-A receptor 6"/>
    <property type="match status" value="1"/>
</dbReference>
<dbReference type="Gene3D" id="2.60.40.1770">
    <property type="entry name" value="ephrin a2 ectodomain"/>
    <property type="match status" value="1"/>
</dbReference>
<dbReference type="Gene3D" id="2.60.120.260">
    <property type="entry name" value="Galactose-binding domain-like"/>
    <property type="match status" value="1"/>
</dbReference>
<dbReference type="Gene3D" id="2.60.40.10">
    <property type="entry name" value="Immunoglobulins"/>
    <property type="match status" value="2"/>
</dbReference>
<dbReference type="Gene3D" id="3.30.200.20">
    <property type="entry name" value="Phosphorylase Kinase, domain 1"/>
    <property type="match status" value="1"/>
</dbReference>
<dbReference type="Gene3D" id="1.20.5.510">
    <property type="entry name" value="Single helix bin"/>
    <property type="match status" value="1"/>
</dbReference>
<dbReference type="Gene3D" id="1.10.150.50">
    <property type="entry name" value="Transcription Factor, Ets-1"/>
    <property type="match status" value="1"/>
</dbReference>
<dbReference type="Gene3D" id="1.10.510.10">
    <property type="entry name" value="Transferase(Phosphotransferase) domain 1"/>
    <property type="match status" value="1"/>
</dbReference>
<dbReference type="Gene3D" id="2.10.50.10">
    <property type="entry name" value="Tumor Necrosis Factor Receptor, subunit A, domain 2"/>
    <property type="match status" value="1"/>
</dbReference>
<dbReference type="InterPro" id="IPR027936">
    <property type="entry name" value="Eph_TM"/>
</dbReference>
<dbReference type="InterPro" id="IPR034263">
    <property type="entry name" value="EphA2_rcpt_lig-bd"/>
</dbReference>
<dbReference type="InterPro" id="IPR001090">
    <property type="entry name" value="Ephrin_rcpt_lig-bd_dom"/>
</dbReference>
<dbReference type="InterPro" id="IPR050449">
    <property type="entry name" value="Ephrin_rcpt_TKs"/>
</dbReference>
<dbReference type="InterPro" id="IPR003961">
    <property type="entry name" value="FN3_dom"/>
</dbReference>
<dbReference type="InterPro" id="IPR036116">
    <property type="entry name" value="FN3_sf"/>
</dbReference>
<dbReference type="InterPro" id="IPR008979">
    <property type="entry name" value="Galactose-bd-like_sf"/>
</dbReference>
<dbReference type="InterPro" id="IPR009030">
    <property type="entry name" value="Growth_fac_rcpt_cys_sf"/>
</dbReference>
<dbReference type="InterPro" id="IPR013783">
    <property type="entry name" value="Ig-like_fold"/>
</dbReference>
<dbReference type="InterPro" id="IPR011009">
    <property type="entry name" value="Kinase-like_dom_sf"/>
</dbReference>
<dbReference type="InterPro" id="IPR000719">
    <property type="entry name" value="Prot_kinase_dom"/>
</dbReference>
<dbReference type="InterPro" id="IPR017441">
    <property type="entry name" value="Protein_kinase_ATP_BS"/>
</dbReference>
<dbReference type="InterPro" id="IPR001660">
    <property type="entry name" value="SAM"/>
</dbReference>
<dbReference type="InterPro" id="IPR013761">
    <property type="entry name" value="SAM/pointed_sf"/>
</dbReference>
<dbReference type="InterPro" id="IPR001245">
    <property type="entry name" value="Ser-Thr/Tyr_kinase_cat_dom"/>
</dbReference>
<dbReference type="InterPro" id="IPR008266">
    <property type="entry name" value="Tyr_kinase_AS"/>
</dbReference>
<dbReference type="InterPro" id="IPR020635">
    <property type="entry name" value="Tyr_kinase_cat_dom"/>
</dbReference>
<dbReference type="InterPro" id="IPR016257">
    <property type="entry name" value="Tyr_kinase_ephrin_rcpt"/>
</dbReference>
<dbReference type="InterPro" id="IPR001426">
    <property type="entry name" value="Tyr_kinase_rcpt_V_CS"/>
</dbReference>
<dbReference type="PANTHER" id="PTHR46877">
    <property type="entry name" value="EPH RECEPTOR A5"/>
    <property type="match status" value="1"/>
</dbReference>
<dbReference type="PANTHER" id="PTHR46877:SF20">
    <property type="entry name" value="RECEPTOR PROTEIN-TYROSINE KINASE"/>
    <property type="match status" value="1"/>
</dbReference>
<dbReference type="Pfam" id="PF14575">
    <property type="entry name" value="EphA2_TM"/>
    <property type="match status" value="1"/>
</dbReference>
<dbReference type="Pfam" id="PF01404">
    <property type="entry name" value="Ephrin_lbd"/>
    <property type="match status" value="1"/>
</dbReference>
<dbReference type="Pfam" id="PF00041">
    <property type="entry name" value="fn3"/>
    <property type="match status" value="2"/>
</dbReference>
<dbReference type="Pfam" id="PF07714">
    <property type="entry name" value="PK_Tyr_Ser-Thr"/>
    <property type="match status" value="1"/>
</dbReference>
<dbReference type="Pfam" id="PF00536">
    <property type="entry name" value="SAM_1"/>
    <property type="match status" value="1"/>
</dbReference>
<dbReference type="PIRSF" id="PIRSF000666">
    <property type="entry name" value="TyrPK_ephrin_receptor"/>
    <property type="match status" value="1"/>
</dbReference>
<dbReference type="PRINTS" id="PR00109">
    <property type="entry name" value="TYRKINASE"/>
</dbReference>
<dbReference type="SMART" id="SM00615">
    <property type="entry name" value="EPH_lbd"/>
    <property type="match status" value="1"/>
</dbReference>
<dbReference type="SMART" id="SM01411">
    <property type="entry name" value="Ephrin_rec_like"/>
    <property type="match status" value="1"/>
</dbReference>
<dbReference type="SMART" id="SM00060">
    <property type="entry name" value="FN3"/>
    <property type="match status" value="2"/>
</dbReference>
<dbReference type="SMART" id="SM00454">
    <property type="entry name" value="SAM"/>
    <property type="match status" value="1"/>
</dbReference>
<dbReference type="SMART" id="SM00219">
    <property type="entry name" value="TyrKc"/>
    <property type="match status" value="1"/>
</dbReference>
<dbReference type="SUPFAM" id="SSF49265">
    <property type="entry name" value="Fibronectin type III"/>
    <property type="match status" value="1"/>
</dbReference>
<dbReference type="SUPFAM" id="SSF49785">
    <property type="entry name" value="Galactose-binding domain-like"/>
    <property type="match status" value="1"/>
</dbReference>
<dbReference type="SUPFAM" id="SSF57184">
    <property type="entry name" value="Growth factor receptor domain"/>
    <property type="match status" value="1"/>
</dbReference>
<dbReference type="SUPFAM" id="SSF56112">
    <property type="entry name" value="Protein kinase-like (PK-like)"/>
    <property type="match status" value="1"/>
</dbReference>
<dbReference type="SUPFAM" id="SSF47769">
    <property type="entry name" value="SAM/Pointed domain"/>
    <property type="match status" value="1"/>
</dbReference>
<dbReference type="PROSITE" id="PS01186">
    <property type="entry name" value="EGF_2"/>
    <property type="match status" value="1"/>
</dbReference>
<dbReference type="PROSITE" id="PS51550">
    <property type="entry name" value="EPH_LBD"/>
    <property type="match status" value="1"/>
</dbReference>
<dbReference type="PROSITE" id="PS50853">
    <property type="entry name" value="FN3"/>
    <property type="match status" value="2"/>
</dbReference>
<dbReference type="PROSITE" id="PS00107">
    <property type="entry name" value="PROTEIN_KINASE_ATP"/>
    <property type="match status" value="1"/>
</dbReference>
<dbReference type="PROSITE" id="PS50011">
    <property type="entry name" value="PROTEIN_KINASE_DOM"/>
    <property type="match status" value="1"/>
</dbReference>
<dbReference type="PROSITE" id="PS00109">
    <property type="entry name" value="PROTEIN_KINASE_TYR"/>
    <property type="match status" value="1"/>
</dbReference>
<dbReference type="PROSITE" id="PS00790">
    <property type="entry name" value="RECEPTOR_TYR_KIN_V_1"/>
    <property type="match status" value="1"/>
</dbReference>
<dbReference type="PROSITE" id="PS00791">
    <property type="entry name" value="RECEPTOR_TYR_KIN_V_2"/>
    <property type="match status" value="1"/>
</dbReference>
<dbReference type="PROSITE" id="PS50105">
    <property type="entry name" value="SAM_DOMAIN"/>
    <property type="match status" value="1"/>
</dbReference>
<proteinExistence type="evidence at transcript level"/>
<protein>
    <recommendedName>
        <fullName>Ephrin type-A receptor 2</fullName>
        <ecNumber>2.7.10.1</ecNumber>
    </recommendedName>
</protein>
<comment type="function">
    <text evidence="2">Receptor tyrosine kinase which binds promiscuously membrane-bound ephrin-A family ligands residing on adjacent cells, leading to contact-dependent bidirectional signaling into neighboring cells. The signaling pathway downstream of the receptor is referred to as forward signaling while the signaling pathway downstream of the ephrin ligand is referred to as reverse signaling. Activated by the ligand ephrin-A1/EFNA1 regulates migration, integrin-mediated adhesion, proliferation and differentiation of cells. Regulates cell adhesion and differentiation through DSG1/desmoglein-1 and inhibition of the ERK1/ERK2 signaling pathway. May also participate in UV radiation-induced apoptosis and have a ligand-independent stimulatory effect on chemotactic cell migration. During development, may function in distinctive aspects of pattern formation and subsequently in development of several fetal tissues. Involved for instance in angiogenesis, in early hindbrain development and epithelial proliferation and branching morphogenesis during mammary gland development. Engaged by the ligand ephrin-A5/EFNA5 may regulate lens fiber cells shape and interactions and be important for lens transparency development and maintenance. With ephrin-A2/EFNA2 may play a role in bone remodeling through regulation of osteoclastogenesis and osteoblastogenesis (By similarity).</text>
</comment>
<comment type="catalytic activity">
    <reaction evidence="9">
        <text>L-tyrosyl-[protein] + ATP = O-phospho-L-tyrosyl-[protein] + ADP + H(+)</text>
        <dbReference type="Rhea" id="RHEA:10596"/>
        <dbReference type="Rhea" id="RHEA-COMP:10136"/>
        <dbReference type="Rhea" id="RHEA-COMP:20101"/>
        <dbReference type="ChEBI" id="CHEBI:15378"/>
        <dbReference type="ChEBI" id="CHEBI:30616"/>
        <dbReference type="ChEBI" id="CHEBI:46858"/>
        <dbReference type="ChEBI" id="CHEBI:61978"/>
        <dbReference type="ChEBI" id="CHEBI:456216"/>
        <dbReference type="EC" id="2.7.10.1"/>
    </reaction>
</comment>
<comment type="subunit">
    <text evidence="1">Homodimer. Interacts with SLA. Interacts (phosphorylated form) with VAV2, VAV3 and PI3-kinase p85 subunit (PIK3R1, PIK3R2 or PIK3R3); critical for the EFNA1-induced activation of RAC1 which stimulates cell migration. Interacts with INPPL1; regulates activated EPHA2 endocytosis and degradation. Interacts (inactivated form) with PTK2/FAK1 and interacts (EFNA1 ligand-activated form) with PTPN11; regulates integrin-mediated adhesion. Interacts with ARHGEF16, DOCK4 and ELMO2; mediates ligand-independent activation of RAC1 which stimulates cell migration. Interacts with CLDN4; phosphorylates CLDN4 and may regulate tight junctions. Interacts with ACP1. Interacts with ANKS1A. Interacts with CEMIP. Interacts with NCK1; may regulate EPHA2 activity in cell migration and adhesion. Interacts with TIMD4 (By similarity).</text>
</comment>
<comment type="subcellular location">
    <subcellularLocation>
        <location evidence="2">Cell membrane</location>
        <topology evidence="4">Single-pass type I membrane protein</topology>
    </subcellularLocation>
    <subcellularLocation>
        <location evidence="2">Cell projection</location>
        <location evidence="2">Ruffle membrane</location>
        <topology evidence="4">Single-pass type I membrane protein</topology>
    </subcellularLocation>
    <subcellularLocation>
        <location evidence="2">Cell projection</location>
        <location evidence="2">Lamellipodium membrane</location>
        <topology evidence="4">Single-pass type I membrane protein</topology>
    </subcellularLocation>
    <subcellularLocation>
        <location evidence="2">Cell junction</location>
        <location evidence="2">Focal adhesion</location>
    </subcellularLocation>
    <text evidence="2">Present at regions of cell-cell contacts but also at the leading edge of migrating cells. Relocates from the plasma membrane to the cytoplasmic and perinuclear regions in cancer cells.</text>
</comment>
<comment type="PTM">
    <text evidence="2 3">Autophosphorylates. Phosphorylated on tyrosine upon binding and activation by EFNA1. Phosphorylated residues Tyr-588 and Tyr-594 are required for binding VAV2 and VAV3 while phosphorylated residues Tyr-735 and Tyr-930 are required for binding PI3-kinase p85 subunit (PIK3R1, PIK3R2 or PIK3R3). These phosphorylated residues are critical for recruitment of VAV2 and VAV3 and PI3-kinase p85 subunit which transduce downstream signaling to activate RAC1 GTPase and cell migration. Dephosphorylation of Tyr-930 by PTPRF prevents the interaction of EPHA2 with NCK1. Phosphorylated at Ser-897 by PKB; serum-induced phosphorylation which targets EPHA2 to the cell leading edge and stimulates cell migration. Phosphorylation by PKB is inhibited by EFNA1-activated EPHA2 which regulates PKB activity via a reciprocal regulatory loop. Phosphorylated at Ser-897 in response to TNF by RPS6KA1 and RPS6KA3; RPS6KA-EPHA2 signaling pathway controls cell migration. Phosphorylated at Ser-897 by PKA; blocks cell retraction induced by EPHA2 kinase activity. Dephosphorylated by ACP1.</text>
</comment>
<comment type="PTM">
    <text evidence="1">Ubiquitinated by CHIP/STUB1. Ubiquitination is regulated by the HSP90 chaperone and regulates the receptor stability and activity through proteasomal degradation. ANKS1A prevents ubiquitination and degradation (By similarity).</text>
</comment>
<comment type="similarity">
    <text evidence="5">Belongs to the protein kinase superfamily. Tyr protein kinase family. Ephrin receptor subfamily.</text>
</comment>